<dbReference type="EC" id="2.5.1.6" evidence="1"/>
<dbReference type="EMBL" id="CP000269">
    <property type="protein sequence ID" value="ABR88269.1"/>
    <property type="molecule type" value="Genomic_DNA"/>
</dbReference>
<dbReference type="RefSeq" id="WP_012081041.1">
    <property type="nucleotide sequence ID" value="NC_009659.1"/>
</dbReference>
<dbReference type="SMR" id="A6T2Z1"/>
<dbReference type="STRING" id="375286.mma_3198"/>
<dbReference type="KEGG" id="mms:mma_3198"/>
<dbReference type="eggNOG" id="COG0192">
    <property type="taxonomic scope" value="Bacteria"/>
</dbReference>
<dbReference type="HOGENOM" id="CLU_041802_1_1_4"/>
<dbReference type="OrthoDB" id="9801686at2"/>
<dbReference type="UniPathway" id="UPA00315">
    <property type="reaction ID" value="UER00080"/>
</dbReference>
<dbReference type="Proteomes" id="UP000006388">
    <property type="component" value="Chromosome"/>
</dbReference>
<dbReference type="GO" id="GO:0005737">
    <property type="term" value="C:cytoplasm"/>
    <property type="evidence" value="ECO:0007669"/>
    <property type="project" value="UniProtKB-SubCell"/>
</dbReference>
<dbReference type="GO" id="GO:0005524">
    <property type="term" value="F:ATP binding"/>
    <property type="evidence" value="ECO:0007669"/>
    <property type="project" value="UniProtKB-UniRule"/>
</dbReference>
<dbReference type="GO" id="GO:0000287">
    <property type="term" value="F:magnesium ion binding"/>
    <property type="evidence" value="ECO:0007669"/>
    <property type="project" value="UniProtKB-UniRule"/>
</dbReference>
<dbReference type="GO" id="GO:0004478">
    <property type="term" value="F:methionine adenosyltransferase activity"/>
    <property type="evidence" value="ECO:0007669"/>
    <property type="project" value="UniProtKB-UniRule"/>
</dbReference>
<dbReference type="GO" id="GO:0006730">
    <property type="term" value="P:one-carbon metabolic process"/>
    <property type="evidence" value="ECO:0007669"/>
    <property type="project" value="UniProtKB-KW"/>
</dbReference>
<dbReference type="GO" id="GO:0006556">
    <property type="term" value="P:S-adenosylmethionine biosynthetic process"/>
    <property type="evidence" value="ECO:0007669"/>
    <property type="project" value="UniProtKB-UniRule"/>
</dbReference>
<dbReference type="CDD" id="cd18079">
    <property type="entry name" value="S-AdoMet_synt"/>
    <property type="match status" value="1"/>
</dbReference>
<dbReference type="FunFam" id="3.30.300.10:FF:000003">
    <property type="entry name" value="S-adenosylmethionine synthase"/>
    <property type="match status" value="1"/>
</dbReference>
<dbReference type="FunFam" id="3.30.300.10:FF:000004">
    <property type="entry name" value="S-adenosylmethionine synthase"/>
    <property type="match status" value="1"/>
</dbReference>
<dbReference type="Gene3D" id="3.30.300.10">
    <property type="match status" value="3"/>
</dbReference>
<dbReference type="HAMAP" id="MF_00086">
    <property type="entry name" value="S_AdoMet_synth1"/>
    <property type="match status" value="1"/>
</dbReference>
<dbReference type="InterPro" id="IPR022631">
    <property type="entry name" value="ADOMET_SYNTHASE_CS"/>
</dbReference>
<dbReference type="InterPro" id="IPR022630">
    <property type="entry name" value="S-AdoMet_synt_C"/>
</dbReference>
<dbReference type="InterPro" id="IPR022629">
    <property type="entry name" value="S-AdoMet_synt_central"/>
</dbReference>
<dbReference type="InterPro" id="IPR022628">
    <property type="entry name" value="S-AdoMet_synt_N"/>
</dbReference>
<dbReference type="InterPro" id="IPR002133">
    <property type="entry name" value="S-AdoMet_synthetase"/>
</dbReference>
<dbReference type="InterPro" id="IPR022636">
    <property type="entry name" value="S-AdoMet_synthetase_sfam"/>
</dbReference>
<dbReference type="NCBIfam" id="TIGR01034">
    <property type="entry name" value="metK"/>
    <property type="match status" value="1"/>
</dbReference>
<dbReference type="PANTHER" id="PTHR11964">
    <property type="entry name" value="S-ADENOSYLMETHIONINE SYNTHETASE"/>
    <property type="match status" value="1"/>
</dbReference>
<dbReference type="Pfam" id="PF02773">
    <property type="entry name" value="S-AdoMet_synt_C"/>
    <property type="match status" value="1"/>
</dbReference>
<dbReference type="Pfam" id="PF02772">
    <property type="entry name" value="S-AdoMet_synt_M"/>
    <property type="match status" value="1"/>
</dbReference>
<dbReference type="Pfam" id="PF00438">
    <property type="entry name" value="S-AdoMet_synt_N"/>
    <property type="match status" value="1"/>
</dbReference>
<dbReference type="PIRSF" id="PIRSF000497">
    <property type="entry name" value="MAT"/>
    <property type="match status" value="1"/>
</dbReference>
<dbReference type="SUPFAM" id="SSF55973">
    <property type="entry name" value="S-adenosylmethionine synthetase"/>
    <property type="match status" value="3"/>
</dbReference>
<dbReference type="PROSITE" id="PS00376">
    <property type="entry name" value="ADOMET_SYNTHASE_1"/>
    <property type="match status" value="1"/>
</dbReference>
<dbReference type="PROSITE" id="PS00377">
    <property type="entry name" value="ADOMET_SYNTHASE_2"/>
    <property type="match status" value="1"/>
</dbReference>
<organism>
    <name type="scientific">Janthinobacterium sp. (strain Marseille)</name>
    <name type="common">Minibacterium massiliensis</name>
    <dbReference type="NCBI Taxonomy" id="375286"/>
    <lineage>
        <taxon>Bacteria</taxon>
        <taxon>Pseudomonadati</taxon>
        <taxon>Pseudomonadota</taxon>
        <taxon>Betaproteobacteria</taxon>
        <taxon>Burkholderiales</taxon>
        <taxon>Oxalobacteraceae</taxon>
        <taxon>Janthinobacterium</taxon>
    </lineage>
</organism>
<evidence type="ECO:0000255" key="1">
    <source>
        <dbReference type="HAMAP-Rule" id="MF_00086"/>
    </source>
</evidence>
<keyword id="KW-0067">ATP-binding</keyword>
<keyword id="KW-0963">Cytoplasm</keyword>
<keyword id="KW-0460">Magnesium</keyword>
<keyword id="KW-0479">Metal-binding</keyword>
<keyword id="KW-0547">Nucleotide-binding</keyword>
<keyword id="KW-0554">One-carbon metabolism</keyword>
<keyword id="KW-0630">Potassium</keyword>
<keyword id="KW-0808">Transferase</keyword>
<sequence length="387" mass="42054">MANEYLFTSESVSEGHPDKVADQISDAILDAIFQQDPKARVAAETLCNTGLVVLAGEITTFANVDYIEVARQTIKRIGYDNADYGIDYKSCAVLVAYDKQSPDIAQGVDEGAGIDLDQGAGDQGLMFGYACDETPELMPAAIHYAHRIVERQSELRKDGRLPWLRPDAKSQVTLRYVDGRPVSIDTIVLSTQHAPEMQHKDIEEAVIESIIKPVVPAEWLKDTRFLVNPTGRFVIGGPQGDCGLTGRKIIVDTYGGAAPHGGGAFSGKDPSKVDRSAAYAGRYVAKNIVAAGLAERAQIQISYAIGVAKPTSVMVTTFGTGKISDEKIAQLVLEHFDLRPKGIVQMLDLLRPIYQKTAAYGHFGREEPEFSWERTDKAQALRAAAGL</sequence>
<protein>
    <recommendedName>
        <fullName evidence="1">S-adenosylmethionine synthase</fullName>
        <shortName evidence="1">AdoMet synthase</shortName>
        <ecNumber evidence="1">2.5.1.6</ecNumber>
    </recommendedName>
    <alternativeName>
        <fullName evidence="1">MAT</fullName>
    </alternativeName>
    <alternativeName>
        <fullName evidence="1">Methionine adenosyltransferase</fullName>
    </alternativeName>
</protein>
<gene>
    <name evidence="1" type="primary">metK</name>
    <name type="ordered locus">mma_3198</name>
</gene>
<proteinExistence type="inferred from homology"/>
<feature type="chain" id="PRO_1000007943" description="S-adenosylmethionine synthase">
    <location>
        <begin position="1"/>
        <end position="387"/>
    </location>
</feature>
<feature type="region of interest" description="Flexible loop" evidence="1">
    <location>
        <begin position="100"/>
        <end position="110"/>
    </location>
</feature>
<feature type="binding site" description="in other chain" evidence="1">
    <location>
        <position position="16"/>
    </location>
    <ligand>
        <name>ATP</name>
        <dbReference type="ChEBI" id="CHEBI:30616"/>
        <note>ligand shared between two neighboring subunits</note>
    </ligand>
</feature>
<feature type="binding site" evidence="1">
    <location>
        <position position="18"/>
    </location>
    <ligand>
        <name>Mg(2+)</name>
        <dbReference type="ChEBI" id="CHEBI:18420"/>
    </ligand>
</feature>
<feature type="binding site" evidence="1">
    <location>
        <position position="44"/>
    </location>
    <ligand>
        <name>K(+)</name>
        <dbReference type="ChEBI" id="CHEBI:29103"/>
    </ligand>
</feature>
<feature type="binding site" description="in other chain" evidence="1">
    <location>
        <position position="57"/>
    </location>
    <ligand>
        <name>L-methionine</name>
        <dbReference type="ChEBI" id="CHEBI:57844"/>
        <note>ligand shared between two neighboring subunits</note>
    </ligand>
</feature>
<feature type="binding site" description="in other chain" evidence="1">
    <location>
        <position position="100"/>
    </location>
    <ligand>
        <name>L-methionine</name>
        <dbReference type="ChEBI" id="CHEBI:57844"/>
        <note>ligand shared between two neighboring subunits</note>
    </ligand>
</feature>
<feature type="binding site" description="in other chain" evidence="1">
    <location>
        <begin position="167"/>
        <end position="169"/>
    </location>
    <ligand>
        <name>ATP</name>
        <dbReference type="ChEBI" id="CHEBI:30616"/>
        <note>ligand shared between two neighboring subunits</note>
    </ligand>
</feature>
<feature type="binding site" description="in other chain" evidence="1">
    <location>
        <begin position="232"/>
        <end position="233"/>
    </location>
    <ligand>
        <name>ATP</name>
        <dbReference type="ChEBI" id="CHEBI:30616"/>
        <note>ligand shared between two neighboring subunits</note>
    </ligand>
</feature>
<feature type="binding site" evidence="1">
    <location>
        <position position="241"/>
    </location>
    <ligand>
        <name>ATP</name>
        <dbReference type="ChEBI" id="CHEBI:30616"/>
        <note>ligand shared between two neighboring subunits</note>
    </ligand>
</feature>
<feature type="binding site" evidence="1">
    <location>
        <position position="241"/>
    </location>
    <ligand>
        <name>L-methionine</name>
        <dbReference type="ChEBI" id="CHEBI:57844"/>
        <note>ligand shared between two neighboring subunits</note>
    </ligand>
</feature>
<feature type="binding site" description="in other chain" evidence="1">
    <location>
        <begin position="247"/>
        <end position="248"/>
    </location>
    <ligand>
        <name>ATP</name>
        <dbReference type="ChEBI" id="CHEBI:30616"/>
        <note>ligand shared between two neighboring subunits</note>
    </ligand>
</feature>
<feature type="binding site" evidence="1">
    <location>
        <position position="264"/>
    </location>
    <ligand>
        <name>ATP</name>
        <dbReference type="ChEBI" id="CHEBI:30616"/>
        <note>ligand shared between two neighboring subunits</note>
    </ligand>
</feature>
<feature type="binding site" evidence="1">
    <location>
        <position position="268"/>
    </location>
    <ligand>
        <name>ATP</name>
        <dbReference type="ChEBI" id="CHEBI:30616"/>
        <note>ligand shared between two neighboring subunits</note>
    </ligand>
</feature>
<feature type="binding site" description="in other chain" evidence="1">
    <location>
        <position position="272"/>
    </location>
    <ligand>
        <name>L-methionine</name>
        <dbReference type="ChEBI" id="CHEBI:57844"/>
        <note>ligand shared between two neighboring subunits</note>
    </ligand>
</feature>
<name>METK_JANMA</name>
<comment type="function">
    <text evidence="1">Catalyzes the formation of S-adenosylmethionine (AdoMet) from methionine and ATP. The overall synthetic reaction is composed of two sequential steps, AdoMet formation and the subsequent tripolyphosphate hydrolysis which occurs prior to release of AdoMet from the enzyme.</text>
</comment>
<comment type="catalytic activity">
    <reaction evidence="1">
        <text>L-methionine + ATP + H2O = S-adenosyl-L-methionine + phosphate + diphosphate</text>
        <dbReference type="Rhea" id="RHEA:21080"/>
        <dbReference type="ChEBI" id="CHEBI:15377"/>
        <dbReference type="ChEBI" id="CHEBI:30616"/>
        <dbReference type="ChEBI" id="CHEBI:33019"/>
        <dbReference type="ChEBI" id="CHEBI:43474"/>
        <dbReference type="ChEBI" id="CHEBI:57844"/>
        <dbReference type="ChEBI" id="CHEBI:59789"/>
        <dbReference type="EC" id="2.5.1.6"/>
    </reaction>
</comment>
<comment type="cofactor">
    <cofactor evidence="1">
        <name>Mg(2+)</name>
        <dbReference type="ChEBI" id="CHEBI:18420"/>
    </cofactor>
    <text evidence="1">Binds 2 divalent ions per subunit.</text>
</comment>
<comment type="cofactor">
    <cofactor evidence="1">
        <name>K(+)</name>
        <dbReference type="ChEBI" id="CHEBI:29103"/>
    </cofactor>
    <text evidence="1">Binds 1 potassium ion per subunit.</text>
</comment>
<comment type="pathway">
    <text evidence="1">Amino-acid biosynthesis; S-adenosyl-L-methionine biosynthesis; S-adenosyl-L-methionine from L-methionine: step 1/1.</text>
</comment>
<comment type="subunit">
    <text evidence="1">Homotetramer; dimer of dimers.</text>
</comment>
<comment type="subcellular location">
    <subcellularLocation>
        <location evidence="1">Cytoplasm</location>
    </subcellularLocation>
</comment>
<comment type="similarity">
    <text evidence="1">Belongs to the AdoMet synthase family.</text>
</comment>
<accession>A6T2Z1</accession>
<reference key="1">
    <citation type="journal article" date="2007" name="PLoS Genet.">
        <title>Genome analysis of Minibacterium massiliensis highlights the convergent evolution of water-living bacteria.</title>
        <authorList>
            <person name="Audic S."/>
            <person name="Robert C."/>
            <person name="Campagna B."/>
            <person name="Parinello H."/>
            <person name="Claverie J.-M."/>
            <person name="Raoult D."/>
            <person name="Drancourt M."/>
        </authorList>
    </citation>
    <scope>NUCLEOTIDE SEQUENCE [LARGE SCALE GENOMIC DNA]</scope>
    <source>
        <strain>Marseille</strain>
    </source>
</reference>